<accession>Q5F359</accession>
<evidence type="ECO:0000250" key="1"/>
<evidence type="ECO:0000305" key="2"/>
<sequence length="188" mass="21018">MESRFTRGKSPLLERPLGRPRGEVSLSAFALLFCELVQYCQRRVYSVAELQSKLAQLGHQVGLRLLDPLVSRERGGRRETKVLSVLLFVKGPVWRALFGKEADKLEQANDDDKTYYVIEREPLVNTFISVPRENSTLNCAAFTAGLVEAVLGASGFPAKVTAHWHKGTTLMIKFEEGVIARDKSLEGR</sequence>
<reference key="1">
    <citation type="journal article" date="2005" name="Genome Biol.">
        <title>Full-length cDNAs from chicken bursal lymphocytes to facilitate gene function analysis.</title>
        <authorList>
            <person name="Caldwell R.B."/>
            <person name="Kierzek A.M."/>
            <person name="Arakawa H."/>
            <person name="Bezzubov Y."/>
            <person name="Zaim J."/>
            <person name="Fiedler P."/>
            <person name="Kutter S."/>
            <person name="Blagodatski A."/>
            <person name="Kostovska D."/>
            <person name="Koter M."/>
            <person name="Plachy J."/>
            <person name="Carninci P."/>
            <person name="Hayashizaki Y."/>
            <person name="Buerstedde J.-M."/>
        </authorList>
    </citation>
    <scope>NUCLEOTIDE SEQUENCE [LARGE SCALE MRNA]</scope>
    <source>
        <strain>CB</strain>
        <tissue>Bursa of Fabricius</tissue>
    </source>
</reference>
<proteinExistence type="evidence at transcript level"/>
<comment type="function">
    <text>May play a role in vesicular transport from endoplasmic reticulum to Golgi.</text>
</comment>
<comment type="subunit">
    <text evidence="1">Part of the multisubunit TRAPP (transport protein particle) complex.</text>
</comment>
<comment type="subcellular location">
    <subcellularLocation>
        <location evidence="1">Golgi apparatus</location>
        <location evidence="1">cis-Golgi network</location>
    </subcellularLocation>
    <subcellularLocation>
        <location evidence="1">Endoplasmic reticulum</location>
    </subcellularLocation>
</comment>
<comment type="similarity">
    <text evidence="2">Belongs to the TRAPP small subunits family. BET3 subfamily.</text>
</comment>
<feature type="chain" id="PRO_0000211581" description="Trafficking protein particle complex subunit 5">
    <location>
        <begin position="1"/>
        <end position="188"/>
    </location>
</feature>
<gene>
    <name type="primary">TRAPPC5</name>
    <name type="ORF">RCJMB04_33f11</name>
</gene>
<keyword id="KW-0256">Endoplasmic reticulum</keyword>
<keyword id="KW-0931">ER-Golgi transport</keyword>
<keyword id="KW-0333">Golgi apparatus</keyword>
<keyword id="KW-1185">Reference proteome</keyword>
<keyword id="KW-0813">Transport</keyword>
<protein>
    <recommendedName>
        <fullName>Trafficking protein particle complex subunit 5</fullName>
    </recommendedName>
</protein>
<dbReference type="EMBL" id="AJ851791">
    <property type="protein sequence ID" value="CAH65425.1"/>
    <property type="molecule type" value="mRNA"/>
</dbReference>
<dbReference type="RefSeq" id="NP_001258088.1">
    <property type="nucleotide sequence ID" value="NM_001271159.2"/>
</dbReference>
<dbReference type="SMR" id="Q5F359"/>
<dbReference type="FunCoup" id="Q5F359">
    <property type="interactions" value="579"/>
</dbReference>
<dbReference type="STRING" id="9031.ENSGALP00000069400"/>
<dbReference type="PaxDb" id="9031-ENSGALP00000042905"/>
<dbReference type="Ensembl" id="ENSGALT00010008504.1">
    <property type="protein sequence ID" value="ENSGALP00010004977.1"/>
    <property type="gene ID" value="ENSGALG00010003680.1"/>
</dbReference>
<dbReference type="Ensembl" id="ENSGALT00010008510.1">
    <property type="protein sequence ID" value="ENSGALP00010004980.1"/>
    <property type="gene ID" value="ENSGALG00010003680.1"/>
</dbReference>
<dbReference type="Ensembl" id="ENSGALT00010008518.1">
    <property type="protein sequence ID" value="ENSGALP00010004985.1"/>
    <property type="gene ID" value="ENSGALG00010003680.1"/>
</dbReference>
<dbReference type="GeneID" id="100858483"/>
<dbReference type="KEGG" id="gga:100858483"/>
<dbReference type="CTD" id="126003"/>
<dbReference type="VEuPathDB" id="HostDB:geneid_100858483"/>
<dbReference type="eggNOG" id="KOG3315">
    <property type="taxonomic scope" value="Eukaryota"/>
</dbReference>
<dbReference type="GeneTree" id="ENSGT00390000000976"/>
<dbReference type="HOGENOM" id="CLU_073154_2_0_1"/>
<dbReference type="InParanoid" id="Q5F359"/>
<dbReference type="OMA" id="KTEVTVW"/>
<dbReference type="OrthoDB" id="10254842at2759"/>
<dbReference type="PhylomeDB" id="Q5F359"/>
<dbReference type="PRO" id="PR:Q5F359"/>
<dbReference type="Proteomes" id="UP000000539">
    <property type="component" value="Chromosome 30"/>
</dbReference>
<dbReference type="GO" id="GO:0005783">
    <property type="term" value="C:endoplasmic reticulum"/>
    <property type="evidence" value="ECO:0007669"/>
    <property type="project" value="UniProtKB-SubCell"/>
</dbReference>
<dbReference type="GO" id="GO:1990070">
    <property type="term" value="C:TRAPPI protein complex"/>
    <property type="evidence" value="ECO:0000318"/>
    <property type="project" value="GO_Central"/>
</dbReference>
<dbReference type="GO" id="GO:1990071">
    <property type="term" value="C:TRAPPII protein complex"/>
    <property type="evidence" value="ECO:0000318"/>
    <property type="project" value="GO_Central"/>
</dbReference>
<dbReference type="GO" id="GO:1990072">
    <property type="term" value="C:TRAPPIII protein complex"/>
    <property type="evidence" value="ECO:0000318"/>
    <property type="project" value="GO_Central"/>
</dbReference>
<dbReference type="GO" id="GO:0006888">
    <property type="term" value="P:endoplasmic reticulum to Golgi vesicle-mediated transport"/>
    <property type="evidence" value="ECO:0000318"/>
    <property type="project" value="GO_Central"/>
</dbReference>
<dbReference type="CDD" id="cd14943">
    <property type="entry name" value="TRAPPC5_Trs31"/>
    <property type="match status" value="1"/>
</dbReference>
<dbReference type="FunFam" id="3.30.1380.20:FF:000005">
    <property type="entry name" value="Trafficking protein particle complex subunit 5"/>
    <property type="match status" value="1"/>
</dbReference>
<dbReference type="Gene3D" id="3.30.1380.20">
    <property type="entry name" value="Trafficking protein particle complex subunit 3"/>
    <property type="match status" value="1"/>
</dbReference>
<dbReference type="InterPro" id="IPR024096">
    <property type="entry name" value="NO_sig/Golgi_transp_ligand-bd"/>
</dbReference>
<dbReference type="InterPro" id="IPR016696">
    <property type="entry name" value="TRAPP-I_su5"/>
</dbReference>
<dbReference type="InterPro" id="IPR007194">
    <property type="entry name" value="TRAPP_component"/>
</dbReference>
<dbReference type="PANTHER" id="PTHR20902">
    <property type="entry name" value="41-2 PROTEIN ANTIGEN-RELATED"/>
    <property type="match status" value="1"/>
</dbReference>
<dbReference type="PANTHER" id="PTHR20902:SF0">
    <property type="entry name" value="TRAFFICKING PROTEIN PARTICLE COMPLEX SUBUNIT 5"/>
    <property type="match status" value="1"/>
</dbReference>
<dbReference type="Pfam" id="PF04051">
    <property type="entry name" value="TRAPP"/>
    <property type="match status" value="1"/>
</dbReference>
<dbReference type="PIRSF" id="PIRSF017479">
    <property type="entry name" value="TRAPP_I_complex_Trs31"/>
    <property type="match status" value="1"/>
</dbReference>
<dbReference type="SUPFAM" id="SSF111126">
    <property type="entry name" value="Ligand-binding domain in the NO signalling and Golgi transport"/>
    <property type="match status" value="1"/>
</dbReference>
<name>TPPC5_CHICK</name>
<organism>
    <name type="scientific">Gallus gallus</name>
    <name type="common">Chicken</name>
    <dbReference type="NCBI Taxonomy" id="9031"/>
    <lineage>
        <taxon>Eukaryota</taxon>
        <taxon>Metazoa</taxon>
        <taxon>Chordata</taxon>
        <taxon>Craniata</taxon>
        <taxon>Vertebrata</taxon>
        <taxon>Euteleostomi</taxon>
        <taxon>Archelosauria</taxon>
        <taxon>Archosauria</taxon>
        <taxon>Dinosauria</taxon>
        <taxon>Saurischia</taxon>
        <taxon>Theropoda</taxon>
        <taxon>Coelurosauria</taxon>
        <taxon>Aves</taxon>
        <taxon>Neognathae</taxon>
        <taxon>Galloanserae</taxon>
        <taxon>Galliformes</taxon>
        <taxon>Phasianidae</taxon>
        <taxon>Phasianinae</taxon>
        <taxon>Gallus</taxon>
    </lineage>
</organism>